<accession>Q3BXE6</accession>
<protein>
    <recommendedName>
        <fullName evidence="1">UDP-3-O-acyl-N-acetylglucosamine deacetylase</fullName>
        <shortName evidence="1">UDP-3-O-acyl-GlcNAc deacetylase</shortName>
        <ecNumber evidence="1">3.5.1.108</ecNumber>
    </recommendedName>
    <alternativeName>
        <fullName evidence="1">UDP-3-O-[R-3-hydroxymyristoyl]-N-acetylglucosamine deacetylase</fullName>
    </alternativeName>
</protein>
<dbReference type="EC" id="3.5.1.108" evidence="1"/>
<dbReference type="EMBL" id="AM039952">
    <property type="protein sequence ID" value="CAJ22467.1"/>
    <property type="molecule type" value="Genomic_DNA"/>
</dbReference>
<dbReference type="RefSeq" id="WP_011346426.1">
    <property type="nucleotide sequence ID" value="NZ_CP017190.1"/>
</dbReference>
<dbReference type="SMR" id="Q3BXE6"/>
<dbReference type="STRING" id="456327.BJD11_18615"/>
<dbReference type="KEGG" id="xcv:XCV0836"/>
<dbReference type="eggNOG" id="COG0774">
    <property type="taxonomic scope" value="Bacteria"/>
</dbReference>
<dbReference type="HOGENOM" id="CLU_046528_1_0_6"/>
<dbReference type="UniPathway" id="UPA00359">
    <property type="reaction ID" value="UER00478"/>
</dbReference>
<dbReference type="Proteomes" id="UP000007069">
    <property type="component" value="Chromosome"/>
</dbReference>
<dbReference type="GO" id="GO:0016020">
    <property type="term" value="C:membrane"/>
    <property type="evidence" value="ECO:0007669"/>
    <property type="project" value="GOC"/>
</dbReference>
<dbReference type="GO" id="GO:0046872">
    <property type="term" value="F:metal ion binding"/>
    <property type="evidence" value="ECO:0007669"/>
    <property type="project" value="UniProtKB-KW"/>
</dbReference>
<dbReference type="GO" id="GO:0103117">
    <property type="term" value="F:UDP-3-O-acyl-N-acetylglucosamine deacetylase activity"/>
    <property type="evidence" value="ECO:0007669"/>
    <property type="project" value="UniProtKB-UniRule"/>
</dbReference>
<dbReference type="GO" id="GO:0009245">
    <property type="term" value="P:lipid A biosynthetic process"/>
    <property type="evidence" value="ECO:0007669"/>
    <property type="project" value="UniProtKB-UniRule"/>
</dbReference>
<dbReference type="Gene3D" id="3.30.230.20">
    <property type="entry name" value="lpxc deacetylase, domain 1"/>
    <property type="match status" value="1"/>
</dbReference>
<dbReference type="Gene3D" id="3.30.1700.10">
    <property type="entry name" value="lpxc deacetylase, domain 2"/>
    <property type="match status" value="1"/>
</dbReference>
<dbReference type="HAMAP" id="MF_00388">
    <property type="entry name" value="LpxC"/>
    <property type="match status" value="1"/>
</dbReference>
<dbReference type="InterPro" id="IPR020568">
    <property type="entry name" value="Ribosomal_Su5_D2-typ_SF"/>
</dbReference>
<dbReference type="InterPro" id="IPR004463">
    <property type="entry name" value="UDP-acyl_GlcNac_deAcase"/>
</dbReference>
<dbReference type="InterPro" id="IPR011334">
    <property type="entry name" value="UDP-acyl_GlcNac_deAcase_C"/>
</dbReference>
<dbReference type="InterPro" id="IPR015870">
    <property type="entry name" value="UDP-acyl_N-AcGlcN_deAcase_N"/>
</dbReference>
<dbReference type="NCBIfam" id="TIGR00325">
    <property type="entry name" value="lpxC"/>
    <property type="match status" value="1"/>
</dbReference>
<dbReference type="PANTHER" id="PTHR33694">
    <property type="entry name" value="UDP-3-O-ACYL-N-ACETYLGLUCOSAMINE DEACETYLASE 1, MITOCHONDRIAL-RELATED"/>
    <property type="match status" value="1"/>
</dbReference>
<dbReference type="PANTHER" id="PTHR33694:SF1">
    <property type="entry name" value="UDP-3-O-ACYL-N-ACETYLGLUCOSAMINE DEACETYLASE 1, MITOCHONDRIAL-RELATED"/>
    <property type="match status" value="1"/>
</dbReference>
<dbReference type="Pfam" id="PF03331">
    <property type="entry name" value="LpxC"/>
    <property type="match status" value="1"/>
</dbReference>
<dbReference type="SUPFAM" id="SSF54211">
    <property type="entry name" value="Ribosomal protein S5 domain 2-like"/>
    <property type="match status" value="2"/>
</dbReference>
<comment type="function">
    <text evidence="1">Catalyzes the hydrolysis of UDP-3-O-myristoyl-N-acetylglucosamine to form UDP-3-O-myristoylglucosamine and acetate, the committed step in lipid A biosynthesis.</text>
</comment>
<comment type="catalytic activity">
    <reaction evidence="1">
        <text>a UDP-3-O-[(3R)-3-hydroxyacyl]-N-acetyl-alpha-D-glucosamine + H2O = a UDP-3-O-[(3R)-3-hydroxyacyl]-alpha-D-glucosamine + acetate</text>
        <dbReference type="Rhea" id="RHEA:67816"/>
        <dbReference type="ChEBI" id="CHEBI:15377"/>
        <dbReference type="ChEBI" id="CHEBI:30089"/>
        <dbReference type="ChEBI" id="CHEBI:137740"/>
        <dbReference type="ChEBI" id="CHEBI:173225"/>
        <dbReference type="EC" id="3.5.1.108"/>
    </reaction>
</comment>
<comment type="cofactor">
    <cofactor evidence="1">
        <name>Zn(2+)</name>
        <dbReference type="ChEBI" id="CHEBI:29105"/>
    </cofactor>
</comment>
<comment type="pathway">
    <text evidence="1">Glycolipid biosynthesis; lipid IV(A) biosynthesis; lipid IV(A) from (3R)-3-hydroxytetradecanoyl-[acyl-carrier-protein] and UDP-N-acetyl-alpha-D-glucosamine: step 2/6.</text>
</comment>
<comment type="similarity">
    <text evidence="1">Belongs to the LpxC family.</text>
</comment>
<organism>
    <name type="scientific">Xanthomonas euvesicatoria pv. vesicatoria (strain 85-10)</name>
    <name type="common">Xanthomonas campestris pv. vesicatoria</name>
    <dbReference type="NCBI Taxonomy" id="316273"/>
    <lineage>
        <taxon>Bacteria</taxon>
        <taxon>Pseudomonadati</taxon>
        <taxon>Pseudomonadota</taxon>
        <taxon>Gammaproteobacteria</taxon>
        <taxon>Lysobacterales</taxon>
        <taxon>Lysobacteraceae</taxon>
        <taxon>Xanthomonas</taxon>
    </lineage>
</organism>
<gene>
    <name evidence="1" type="primary">lpxC</name>
    <name type="ordered locus">XCV0836</name>
</gene>
<keyword id="KW-0378">Hydrolase</keyword>
<keyword id="KW-0441">Lipid A biosynthesis</keyword>
<keyword id="KW-0444">Lipid biosynthesis</keyword>
<keyword id="KW-0443">Lipid metabolism</keyword>
<keyword id="KW-0479">Metal-binding</keyword>
<keyword id="KW-0862">Zinc</keyword>
<name>LPXC_XANE5</name>
<sequence>MTQQRTLKNTIRATGVGLHSGDKVYMTLRPAPVDHGVVFRRVDLEPVVEVPADAELVTETTLCTGLTCNGAKIQTVEHLMSALAGLGVDNVIVELSSAELPIMDGSSGPFVFLLQSAGIVEQSKPKRFIRIKQTVEVRDGDKVARFEPYEGYKLGFTIEFNHPMIPAKQSRQEIEFSTSAYVKEISRARTFGFMRDLEYMRERNLGLGGSMDNAIVLDEFRVLNEDGLRYTNEFVRHKILDAIGDLYLAGGAILGAYEGFKSGHALNNKLVRALLADQAAWEWVSFPEGTEQPPVTYASPVYA</sequence>
<proteinExistence type="inferred from homology"/>
<feature type="chain" id="PRO_0000253703" description="UDP-3-O-acyl-N-acetylglucosamine deacetylase">
    <location>
        <begin position="1"/>
        <end position="303"/>
    </location>
</feature>
<feature type="active site" description="Proton donor" evidence="1">
    <location>
        <position position="264"/>
    </location>
</feature>
<feature type="binding site" evidence="1">
    <location>
        <position position="78"/>
    </location>
    <ligand>
        <name>Zn(2+)</name>
        <dbReference type="ChEBI" id="CHEBI:29105"/>
    </ligand>
</feature>
<feature type="binding site" evidence="1">
    <location>
        <position position="237"/>
    </location>
    <ligand>
        <name>Zn(2+)</name>
        <dbReference type="ChEBI" id="CHEBI:29105"/>
    </ligand>
</feature>
<feature type="binding site" evidence="1">
    <location>
        <position position="241"/>
    </location>
    <ligand>
        <name>Zn(2+)</name>
        <dbReference type="ChEBI" id="CHEBI:29105"/>
    </ligand>
</feature>
<evidence type="ECO:0000255" key="1">
    <source>
        <dbReference type="HAMAP-Rule" id="MF_00388"/>
    </source>
</evidence>
<reference key="1">
    <citation type="journal article" date="2005" name="J. Bacteriol.">
        <title>Insights into genome plasticity and pathogenicity of the plant pathogenic Bacterium Xanthomonas campestris pv. vesicatoria revealed by the complete genome sequence.</title>
        <authorList>
            <person name="Thieme F."/>
            <person name="Koebnik R."/>
            <person name="Bekel T."/>
            <person name="Berger C."/>
            <person name="Boch J."/>
            <person name="Buettner D."/>
            <person name="Caldana C."/>
            <person name="Gaigalat L."/>
            <person name="Goesmann A."/>
            <person name="Kay S."/>
            <person name="Kirchner O."/>
            <person name="Lanz C."/>
            <person name="Linke B."/>
            <person name="McHardy A.C."/>
            <person name="Meyer F."/>
            <person name="Mittenhuber G."/>
            <person name="Nies D.H."/>
            <person name="Niesbach-Kloesgen U."/>
            <person name="Patschkowski T."/>
            <person name="Rueckert C."/>
            <person name="Rupp O."/>
            <person name="Schneiker S."/>
            <person name="Schuster S.C."/>
            <person name="Vorhoelter F.J."/>
            <person name="Weber E."/>
            <person name="Puehler A."/>
            <person name="Bonas U."/>
            <person name="Bartels D."/>
            <person name="Kaiser O."/>
        </authorList>
    </citation>
    <scope>NUCLEOTIDE SEQUENCE [LARGE SCALE GENOMIC DNA]</scope>
    <source>
        <strain>85-10</strain>
    </source>
</reference>